<evidence type="ECO:0000255" key="1">
    <source>
        <dbReference type="HAMAP-Rule" id="MF_00580"/>
    </source>
</evidence>
<sequence length="95" mass="9979">MSIKPLHDRVVVKPIEADEISAGGIVIPDSAKEKSTKGEVVAVGPGKPLDNGSVRAPSLKVGDKVIYGQYAGSSYKSEGVEYKVLREDDVLAVIG</sequence>
<reference key="1">
    <citation type="submission" date="2008-06" db="EMBL/GenBank/DDBJ databases">
        <title>Complete sequence of Stenotrophomonas maltophilia R551-3.</title>
        <authorList>
            <consortium name="US DOE Joint Genome Institute"/>
            <person name="Lucas S."/>
            <person name="Copeland A."/>
            <person name="Lapidus A."/>
            <person name="Glavina del Rio T."/>
            <person name="Dalin E."/>
            <person name="Tice H."/>
            <person name="Pitluck S."/>
            <person name="Chain P."/>
            <person name="Malfatti S."/>
            <person name="Shin M."/>
            <person name="Vergez L."/>
            <person name="Lang D."/>
            <person name="Schmutz J."/>
            <person name="Larimer F."/>
            <person name="Land M."/>
            <person name="Hauser L."/>
            <person name="Kyrpides N."/>
            <person name="Mikhailova N."/>
            <person name="Taghavi S."/>
            <person name="Monchy S."/>
            <person name="Newman L."/>
            <person name="Vangronsveld J."/>
            <person name="van der Lelie D."/>
            <person name="Richardson P."/>
        </authorList>
    </citation>
    <scope>NUCLEOTIDE SEQUENCE [LARGE SCALE GENOMIC DNA]</scope>
    <source>
        <strain>R551-3</strain>
    </source>
</reference>
<proteinExistence type="inferred from homology"/>
<dbReference type="EMBL" id="CP001111">
    <property type="protein sequence ID" value="ACF53326.1"/>
    <property type="molecule type" value="Genomic_DNA"/>
</dbReference>
<dbReference type="RefSeq" id="WP_006396661.1">
    <property type="nucleotide sequence ID" value="NC_011071.1"/>
</dbReference>
<dbReference type="SMR" id="B4SKL9"/>
<dbReference type="STRING" id="391008.Smal_3627"/>
<dbReference type="KEGG" id="smt:Smal_3627"/>
<dbReference type="eggNOG" id="COG0234">
    <property type="taxonomic scope" value="Bacteria"/>
</dbReference>
<dbReference type="HOGENOM" id="CLU_132825_2_0_6"/>
<dbReference type="OrthoDB" id="9806791at2"/>
<dbReference type="Proteomes" id="UP000001867">
    <property type="component" value="Chromosome"/>
</dbReference>
<dbReference type="GO" id="GO:0005737">
    <property type="term" value="C:cytoplasm"/>
    <property type="evidence" value="ECO:0007669"/>
    <property type="project" value="UniProtKB-SubCell"/>
</dbReference>
<dbReference type="GO" id="GO:0005524">
    <property type="term" value="F:ATP binding"/>
    <property type="evidence" value="ECO:0007669"/>
    <property type="project" value="InterPro"/>
</dbReference>
<dbReference type="GO" id="GO:0046872">
    <property type="term" value="F:metal ion binding"/>
    <property type="evidence" value="ECO:0007669"/>
    <property type="project" value="TreeGrafter"/>
</dbReference>
<dbReference type="GO" id="GO:0044183">
    <property type="term" value="F:protein folding chaperone"/>
    <property type="evidence" value="ECO:0007669"/>
    <property type="project" value="InterPro"/>
</dbReference>
<dbReference type="GO" id="GO:0051087">
    <property type="term" value="F:protein-folding chaperone binding"/>
    <property type="evidence" value="ECO:0007669"/>
    <property type="project" value="TreeGrafter"/>
</dbReference>
<dbReference type="GO" id="GO:0051082">
    <property type="term" value="F:unfolded protein binding"/>
    <property type="evidence" value="ECO:0007669"/>
    <property type="project" value="TreeGrafter"/>
</dbReference>
<dbReference type="GO" id="GO:0051085">
    <property type="term" value="P:chaperone cofactor-dependent protein refolding"/>
    <property type="evidence" value="ECO:0007669"/>
    <property type="project" value="TreeGrafter"/>
</dbReference>
<dbReference type="CDD" id="cd00320">
    <property type="entry name" value="cpn10"/>
    <property type="match status" value="1"/>
</dbReference>
<dbReference type="FunFam" id="2.30.33.40:FF:000001">
    <property type="entry name" value="10 kDa chaperonin"/>
    <property type="match status" value="1"/>
</dbReference>
<dbReference type="Gene3D" id="2.30.33.40">
    <property type="entry name" value="GroES chaperonin"/>
    <property type="match status" value="1"/>
</dbReference>
<dbReference type="HAMAP" id="MF_00580">
    <property type="entry name" value="CH10"/>
    <property type="match status" value="1"/>
</dbReference>
<dbReference type="InterPro" id="IPR020818">
    <property type="entry name" value="Chaperonin_GroES"/>
</dbReference>
<dbReference type="InterPro" id="IPR037124">
    <property type="entry name" value="Chaperonin_GroES_sf"/>
</dbReference>
<dbReference type="InterPro" id="IPR018369">
    <property type="entry name" value="Chaprnonin_Cpn10_CS"/>
</dbReference>
<dbReference type="InterPro" id="IPR011032">
    <property type="entry name" value="GroES-like_sf"/>
</dbReference>
<dbReference type="NCBIfam" id="NF001527">
    <property type="entry name" value="PRK00364.1-2"/>
    <property type="match status" value="1"/>
</dbReference>
<dbReference type="NCBIfam" id="NF001531">
    <property type="entry name" value="PRK00364.2-2"/>
    <property type="match status" value="1"/>
</dbReference>
<dbReference type="NCBIfam" id="NF001533">
    <property type="entry name" value="PRK00364.2-4"/>
    <property type="match status" value="1"/>
</dbReference>
<dbReference type="PANTHER" id="PTHR10772">
    <property type="entry name" value="10 KDA HEAT SHOCK PROTEIN"/>
    <property type="match status" value="1"/>
</dbReference>
<dbReference type="PANTHER" id="PTHR10772:SF58">
    <property type="entry name" value="CO-CHAPERONIN GROES"/>
    <property type="match status" value="1"/>
</dbReference>
<dbReference type="Pfam" id="PF00166">
    <property type="entry name" value="Cpn10"/>
    <property type="match status" value="1"/>
</dbReference>
<dbReference type="PRINTS" id="PR00297">
    <property type="entry name" value="CHAPERONIN10"/>
</dbReference>
<dbReference type="SMART" id="SM00883">
    <property type="entry name" value="Cpn10"/>
    <property type="match status" value="1"/>
</dbReference>
<dbReference type="SUPFAM" id="SSF50129">
    <property type="entry name" value="GroES-like"/>
    <property type="match status" value="1"/>
</dbReference>
<dbReference type="PROSITE" id="PS00681">
    <property type="entry name" value="CHAPERONINS_CPN10"/>
    <property type="match status" value="1"/>
</dbReference>
<gene>
    <name evidence="1" type="primary">groES</name>
    <name evidence="1" type="synonym">groS</name>
    <name type="ordered locus">Smal_3627</name>
</gene>
<accession>B4SKL9</accession>
<keyword id="KW-0143">Chaperone</keyword>
<keyword id="KW-0963">Cytoplasm</keyword>
<name>CH10_STRM5</name>
<protein>
    <recommendedName>
        <fullName evidence="1">Co-chaperonin GroES</fullName>
    </recommendedName>
    <alternativeName>
        <fullName evidence="1">10 kDa chaperonin</fullName>
    </alternativeName>
    <alternativeName>
        <fullName evidence="1">Chaperonin-10</fullName>
        <shortName evidence="1">Cpn10</shortName>
    </alternativeName>
</protein>
<organism>
    <name type="scientific">Stenotrophomonas maltophilia (strain R551-3)</name>
    <dbReference type="NCBI Taxonomy" id="391008"/>
    <lineage>
        <taxon>Bacteria</taxon>
        <taxon>Pseudomonadati</taxon>
        <taxon>Pseudomonadota</taxon>
        <taxon>Gammaproteobacteria</taxon>
        <taxon>Lysobacterales</taxon>
        <taxon>Lysobacteraceae</taxon>
        <taxon>Stenotrophomonas</taxon>
        <taxon>Stenotrophomonas maltophilia group</taxon>
    </lineage>
</organism>
<feature type="chain" id="PRO_1000129710" description="Co-chaperonin GroES">
    <location>
        <begin position="1"/>
        <end position="95"/>
    </location>
</feature>
<comment type="function">
    <text evidence="1">Together with the chaperonin GroEL, plays an essential role in assisting protein folding. The GroEL-GroES system forms a nano-cage that allows encapsulation of the non-native substrate proteins and provides a physical environment optimized to promote and accelerate protein folding. GroES binds to the apical surface of the GroEL ring, thereby capping the opening of the GroEL channel.</text>
</comment>
<comment type="subunit">
    <text evidence="1">Heptamer of 7 subunits arranged in a ring. Interacts with the chaperonin GroEL.</text>
</comment>
<comment type="subcellular location">
    <subcellularLocation>
        <location evidence="1">Cytoplasm</location>
    </subcellularLocation>
</comment>
<comment type="similarity">
    <text evidence="1">Belongs to the GroES chaperonin family.</text>
</comment>